<gene>
    <name evidence="1" type="primary">clpS</name>
    <name type="ordered locus">ESA_02457</name>
</gene>
<accession>A7MEQ8</accession>
<name>CLPS_CROS8</name>
<evidence type="ECO:0000255" key="1">
    <source>
        <dbReference type="HAMAP-Rule" id="MF_00302"/>
    </source>
</evidence>
<proteinExistence type="inferred from homology"/>
<protein>
    <recommendedName>
        <fullName evidence="1">ATP-dependent Clp protease adapter protein ClpS</fullName>
    </recommendedName>
</protein>
<dbReference type="EMBL" id="CP000783">
    <property type="protein sequence ID" value="ABU77703.1"/>
    <property type="molecule type" value="Genomic_DNA"/>
</dbReference>
<dbReference type="RefSeq" id="WP_004387936.1">
    <property type="nucleotide sequence ID" value="NC_009778.1"/>
</dbReference>
<dbReference type="SMR" id="A7MEQ8"/>
<dbReference type="GeneID" id="92806906"/>
<dbReference type="KEGG" id="esa:ESA_02457"/>
<dbReference type="HOGENOM" id="CLU_134358_2_1_6"/>
<dbReference type="Proteomes" id="UP000000260">
    <property type="component" value="Chromosome"/>
</dbReference>
<dbReference type="GO" id="GO:0030163">
    <property type="term" value="P:protein catabolic process"/>
    <property type="evidence" value="ECO:0007669"/>
    <property type="project" value="InterPro"/>
</dbReference>
<dbReference type="GO" id="GO:0006508">
    <property type="term" value="P:proteolysis"/>
    <property type="evidence" value="ECO:0007669"/>
    <property type="project" value="UniProtKB-UniRule"/>
</dbReference>
<dbReference type="FunFam" id="3.30.1390.10:FF:000002">
    <property type="entry name" value="ATP-dependent Clp protease adapter protein ClpS"/>
    <property type="match status" value="1"/>
</dbReference>
<dbReference type="Gene3D" id="3.30.1390.10">
    <property type="match status" value="1"/>
</dbReference>
<dbReference type="HAMAP" id="MF_00302">
    <property type="entry name" value="ClpS"/>
    <property type="match status" value="1"/>
</dbReference>
<dbReference type="InterPro" id="IPR022935">
    <property type="entry name" value="ClpS"/>
</dbReference>
<dbReference type="InterPro" id="IPR003769">
    <property type="entry name" value="ClpS_core"/>
</dbReference>
<dbReference type="InterPro" id="IPR014719">
    <property type="entry name" value="Ribosomal_bL12_C/ClpS-like"/>
</dbReference>
<dbReference type="NCBIfam" id="NF000670">
    <property type="entry name" value="PRK00033.1-3"/>
    <property type="match status" value="1"/>
</dbReference>
<dbReference type="NCBIfam" id="NF000672">
    <property type="entry name" value="PRK00033.1-5"/>
    <property type="match status" value="1"/>
</dbReference>
<dbReference type="PANTHER" id="PTHR33473:SF19">
    <property type="entry name" value="ATP-DEPENDENT CLP PROTEASE ADAPTER PROTEIN CLPS"/>
    <property type="match status" value="1"/>
</dbReference>
<dbReference type="PANTHER" id="PTHR33473">
    <property type="entry name" value="ATP-DEPENDENT CLP PROTEASE ADAPTER PROTEIN CLPS1, CHLOROPLASTIC"/>
    <property type="match status" value="1"/>
</dbReference>
<dbReference type="Pfam" id="PF02617">
    <property type="entry name" value="ClpS"/>
    <property type="match status" value="1"/>
</dbReference>
<dbReference type="SUPFAM" id="SSF54736">
    <property type="entry name" value="ClpS-like"/>
    <property type="match status" value="1"/>
</dbReference>
<organism>
    <name type="scientific">Cronobacter sakazakii (strain ATCC BAA-894)</name>
    <name type="common">Enterobacter sakazakii</name>
    <dbReference type="NCBI Taxonomy" id="290339"/>
    <lineage>
        <taxon>Bacteria</taxon>
        <taxon>Pseudomonadati</taxon>
        <taxon>Pseudomonadota</taxon>
        <taxon>Gammaproteobacteria</taxon>
        <taxon>Enterobacterales</taxon>
        <taxon>Enterobacteriaceae</taxon>
        <taxon>Cronobacter</taxon>
    </lineage>
</organism>
<reference key="1">
    <citation type="journal article" date="2010" name="PLoS ONE">
        <title>Genome sequence of Cronobacter sakazakii BAA-894 and comparative genomic hybridization analysis with other Cronobacter species.</title>
        <authorList>
            <person name="Kucerova E."/>
            <person name="Clifton S.W."/>
            <person name="Xia X.Q."/>
            <person name="Long F."/>
            <person name="Porwollik S."/>
            <person name="Fulton L."/>
            <person name="Fronick C."/>
            <person name="Minx P."/>
            <person name="Kyung K."/>
            <person name="Warren W."/>
            <person name="Fulton R."/>
            <person name="Feng D."/>
            <person name="Wollam A."/>
            <person name="Shah N."/>
            <person name="Bhonagiri V."/>
            <person name="Nash W.E."/>
            <person name="Hallsworth-Pepin K."/>
            <person name="Wilson R.K."/>
            <person name="McClelland M."/>
            <person name="Forsythe S.J."/>
        </authorList>
    </citation>
    <scope>NUCLEOTIDE SEQUENCE [LARGE SCALE GENOMIC DNA]</scope>
    <source>
        <strain>ATCC BAA-894</strain>
    </source>
</reference>
<feature type="chain" id="PRO_1000022608" description="ATP-dependent Clp protease adapter protein ClpS">
    <location>
        <begin position="1"/>
        <end position="106"/>
    </location>
</feature>
<keyword id="KW-1185">Reference proteome</keyword>
<comment type="function">
    <text evidence="1">Involved in the modulation of the specificity of the ClpAP-mediated ATP-dependent protein degradation.</text>
</comment>
<comment type="subunit">
    <text evidence="1">Binds to the N-terminal domain of the chaperone ClpA.</text>
</comment>
<comment type="similarity">
    <text evidence="1">Belongs to the ClpS family.</text>
</comment>
<sequence length="106" mass="12249">MSKDKSWLDFDHLAEDDLREALKPPSMYKVILMNDDYTPMEFVIDVLQKFFSYDVERATQLMLTVHYQGKAICGVFTAEVAETKVALVNKYARENDHPLLCTLEKA</sequence>